<sequence length="250" mass="28413">MSDLTSTILFEHPLNEKMRTWLRMEFLLQQLESHRSLDNIANALTFFRSASDLIDVLERGEVRTDLLKELERQQQKLQQWADIPGVDVSLVDSLRNQLKSRAAVLMSAPRIGQSLKEDRLISVVRQRLSIPGGCCSFDLPTLHVWLHQPSEQRDQHINKLLASLAPLHQSLTIILDLIRQSCPLRSQISLNGFFQDNAGGADLLRLRLPLDPQLYPQISGHKTRYAIRFLALDSENGTVPARLSFELACC</sequence>
<proteinExistence type="inferred from homology"/>
<dbReference type="EMBL" id="CP000720">
    <property type="protein sequence ID" value="ABS46166.1"/>
    <property type="molecule type" value="Genomic_DNA"/>
</dbReference>
<dbReference type="RefSeq" id="WP_012105671.1">
    <property type="nucleotide sequence ID" value="NC_009708.1"/>
</dbReference>
<dbReference type="SMR" id="A7FM54"/>
<dbReference type="KEGG" id="ypi:YpsIP31758_3375"/>
<dbReference type="HOGENOM" id="CLU_076303_0_0_6"/>
<dbReference type="Proteomes" id="UP000002412">
    <property type="component" value="Chromosome"/>
</dbReference>
<dbReference type="GO" id="GO:0032153">
    <property type="term" value="C:cell division site"/>
    <property type="evidence" value="ECO:0007669"/>
    <property type="project" value="TreeGrafter"/>
</dbReference>
<dbReference type="GO" id="GO:0005737">
    <property type="term" value="C:cytoplasm"/>
    <property type="evidence" value="ECO:0007669"/>
    <property type="project" value="UniProtKB-SubCell"/>
</dbReference>
<dbReference type="GO" id="GO:0000917">
    <property type="term" value="P:division septum assembly"/>
    <property type="evidence" value="ECO:0007669"/>
    <property type="project" value="UniProtKB-KW"/>
</dbReference>
<dbReference type="GO" id="GO:0043093">
    <property type="term" value="P:FtsZ-dependent cytokinesis"/>
    <property type="evidence" value="ECO:0007669"/>
    <property type="project" value="UniProtKB-UniRule"/>
</dbReference>
<dbReference type="FunFam" id="1.10.3900.10:FF:000001">
    <property type="entry name" value="Cell division protein ZapD"/>
    <property type="match status" value="1"/>
</dbReference>
<dbReference type="FunFam" id="2.60.440.10:FF:000001">
    <property type="entry name" value="Cell division protein ZapD"/>
    <property type="match status" value="1"/>
</dbReference>
<dbReference type="Gene3D" id="1.10.3900.10">
    <property type="entry name" value="YacF-like"/>
    <property type="match status" value="1"/>
</dbReference>
<dbReference type="Gene3D" id="2.60.440.10">
    <property type="entry name" value="YacF-like domains"/>
    <property type="match status" value="1"/>
</dbReference>
<dbReference type="HAMAP" id="MF_01092">
    <property type="entry name" value="ZapD"/>
    <property type="match status" value="1"/>
</dbReference>
<dbReference type="InterPro" id="IPR009777">
    <property type="entry name" value="ZapD"/>
</dbReference>
<dbReference type="InterPro" id="IPR027462">
    <property type="entry name" value="ZapD_C"/>
</dbReference>
<dbReference type="InterPro" id="IPR036268">
    <property type="entry name" value="ZapD_sf"/>
</dbReference>
<dbReference type="NCBIfam" id="NF003653">
    <property type="entry name" value="PRK05287.1-1"/>
    <property type="match status" value="1"/>
</dbReference>
<dbReference type="NCBIfam" id="NF003655">
    <property type="entry name" value="PRK05287.1-3"/>
    <property type="match status" value="1"/>
</dbReference>
<dbReference type="PANTHER" id="PTHR39455">
    <property type="entry name" value="CELL DIVISION PROTEIN ZAPD"/>
    <property type="match status" value="1"/>
</dbReference>
<dbReference type="PANTHER" id="PTHR39455:SF1">
    <property type="entry name" value="CELL DIVISION PROTEIN ZAPD"/>
    <property type="match status" value="1"/>
</dbReference>
<dbReference type="Pfam" id="PF07072">
    <property type="entry name" value="ZapD"/>
    <property type="match status" value="1"/>
</dbReference>
<dbReference type="SUPFAM" id="SSF160950">
    <property type="entry name" value="YacF-like"/>
    <property type="match status" value="1"/>
</dbReference>
<organism>
    <name type="scientific">Yersinia pseudotuberculosis serotype O:1b (strain IP 31758)</name>
    <dbReference type="NCBI Taxonomy" id="349747"/>
    <lineage>
        <taxon>Bacteria</taxon>
        <taxon>Pseudomonadati</taxon>
        <taxon>Pseudomonadota</taxon>
        <taxon>Gammaproteobacteria</taxon>
        <taxon>Enterobacterales</taxon>
        <taxon>Yersiniaceae</taxon>
        <taxon>Yersinia</taxon>
    </lineage>
</organism>
<protein>
    <recommendedName>
        <fullName evidence="1">Cell division protein ZapD</fullName>
    </recommendedName>
    <alternativeName>
        <fullName evidence="1">Z ring-associated protein D</fullName>
    </alternativeName>
</protein>
<keyword id="KW-0131">Cell cycle</keyword>
<keyword id="KW-0132">Cell division</keyword>
<keyword id="KW-0963">Cytoplasm</keyword>
<keyword id="KW-0717">Septation</keyword>
<feature type="chain" id="PRO_1000064930" description="Cell division protein ZapD">
    <location>
        <begin position="1"/>
        <end position="250"/>
    </location>
</feature>
<evidence type="ECO:0000255" key="1">
    <source>
        <dbReference type="HAMAP-Rule" id="MF_01092"/>
    </source>
</evidence>
<name>ZAPD_YERP3</name>
<reference key="1">
    <citation type="journal article" date="2007" name="PLoS Genet.">
        <title>The complete genome sequence of Yersinia pseudotuberculosis IP31758, the causative agent of Far East scarlet-like fever.</title>
        <authorList>
            <person name="Eppinger M."/>
            <person name="Rosovitz M.J."/>
            <person name="Fricke W.F."/>
            <person name="Rasko D.A."/>
            <person name="Kokorina G."/>
            <person name="Fayolle C."/>
            <person name="Lindler L.E."/>
            <person name="Carniel E."/>
            <person name="Ravel J."/>
        </authorList>
    </citation>
    <scope>NUCLEOTIDE SEQUENCE [LARGE SCALE GENOMIC DNA]</scope>
    <source>
        <strain>IP 31758</strain>
    </source>
</reference>
<accession>A7FM54</accession>
<gene>
    <name evidence="1" type="primary">zapD</name>
    <name type="ordered locus">YpsIP31758_3375</name>
</gene>
<comment type="function">
    <text evidence="1">Cell division factor that enhances FtsZ-ring assembly. Directly interacts with FtsZ and promotes bundling of FtsZ protofilaments, with a reduction in FtsZ GTPase activity.</text>
</comment>
<comment type="subunit">
    <text evidence="1">Interacts with FtsZ.</text>
</comment>
<comment type="subcellular location">
    <subcellularLocation>
        <location evidence="1">Cytoplasm</location>
    </subcellularLocation>
    <text evidence="1">Localizes to mid-cell in an FtsZ-dependent manner.</text>
</comment>
<comment type="similarity">
    <text evidence="1">Belongs to the ZapD family.</text>
</comment>